<accession>Q6MD56</accession>
<keyword id="KW-0963">Cytoplasm</keyword>
<keyword id="KW-0251">Elongation factor</keyword>
<keyword id="KW-0648">Protein biosynthesis</keyword>
<keyword id="KW-1185">Reference proteome</keyword>
<protein>
    <recommendedName>
        <fullName>Elongation factor P 1</fullName>
        <shortName>EF-P 1</shortName>
    </recommendedName>
</protein>
<proteinExistence type="inferred from homology"/>
<name>EFP1_PARUW</name>
<comment type="function">
    <text evidence="1">Involved in peptide bond synthesis. Stimulates efficient translation and peptide-bond synthesis on native or reconstituted 70S ribosomes in vitro. Probably functions indirectly by altering the affinity of the ribosome for aminoacyl-tRNA, thus increasing their reactivity as acceptors for peptidyl transferase (By similarity).</text>
</comment>
<comment type="pathway">
    <text>Protein biosynthesis; polypeptide chain elongation.</text>
</comment>
<comment type="subcellular location">
    <subcellularLocation>
        <location evidence="1">Cytoplasm</location>
    </subcellularLocation>
</comment>
<comment type="similarity">
    <text evidence="2">Belongs to the elongation factor P family.</text>
</comment>
<reference key="1">
    <citation type="journal article" date="2004" name="Science">
        <title>Illuminating the evolutionary history of chlamydiae.</title>
        <authorList>
            <person name="Horn M."/>
            <person name="Collingro A."/>
            <person name="Schmitz-Esser S."/>
            <person name="Beier C.L."/>
            <person name="Purkhold U."/>
            <person name="Fartmann B."/>
            <person name="Brandt P."/>
            <person name="Nyakatura G.J."/>
            <person name="Droege M."/>
            <person name="Frishman D."/>
            <person name="Rattei T."/>
            <person name="Mewes H.-W."/>
            <person name="Wagner M."/>
        </authorList>
    </citation>
    <scope>NUCLEOTIDE SEQUENCE [LARGE SCALE GENOMIC DNA]</scope>
    <source>
        <strain>UWE25</strain>
    </source>
</reference>
<feature type="chain" id="PRO_0000094300" description="Elongation factor P 1">
    <location>
        <begin position="1"/>
        <end position="184"/>
    </location>
</feature>
<organism>
    <name type="scientific">Protochlamydia amoebophila (strain UWE25)</name>
    <dbReference type="NCBI Taxonomy" id="264201"/>
    <lineage>
        <taxon>Bacteria</taxon>
        <taxon>Pseudomonadati</taxon>
        <taxon>Chlamydiota</taxon>
        <taxon>Chlamydiia</taxon>
        <taxon>Parachlamydiales</taxon>
        <taxon>Parachlamydiaceae</taxon>
        <taxon>Candidatus Protochlamydia</taxon>
    </lineage>
</organism>
<evidence type="ECO:0000250" key="1"/>
<evidence type="ECO:0000305" key="2"/>
<gene>
    <name type="primary">efp1</name>
    <name type="ordered locus">pc0769</name>
</gene>
<dbReference type="EMBL" id="BX908798">
    <property type="protein sequence ID" value="CAF23493.1"/>
    <property type="molecule type" value="Genomic_DNA"/>
</dbReference>
<dbReference type="RefSeq" id="WP_011175319.1">
    <property type="nucleotide sequence ID" value="NC_005861.2"/>
</dbReference>
<dbReference type="SMR" id="Q6MD56"/>
<dbReference type="STRING" id="264201.pc0769"/>
<dbReference type="KEGG" id="pcu:PC_RS03690"/>
<dbReference type="eggNOG" id="COG0231">
    <property type="taxonomic scope" value="Bacteria"/>
</dbReference>
<dbReference type="HOGENOM" id="CLU_074944_0_1_0"/>
<dbReference type="OrthoDB" id="9801844at2"/>
<dbReference type="UniPathway" id="UPA00345"/>
<dbReference type="Proteomes" id="UP000000529">
    <property type="component" value="Chromosome"/>
</dbReference>
<dbReference type="GO" id="GO:0005737">
    <property type="term" value="C:cytoplasm"/>
    <property type="evidence" value="ECO:0007669"/>
    <property type="project" value="UniProtKB-SubCell"/>
</dbReference>
<dbReference type="GO" id="GO:0003746">
    <property type="term" value="F:translation elongation factor activity"/>
    <property type="evidence" value="ECO:0007669"/>
    <property type="project" value="UniProtKB-UniRule"/>
</dbReference>
<dbReference type="GO" id="GO:0043043">
    <property type="term" value="P:peptide biosynthetic process"/>
    <property type="evidence" value="ECO:0007669"/>
    <property type="project" value="InterPro"/>
</dbReference>
<dbReference type="CDD" id="cd05794">
    <property type="entry name" value="S1_EF-P_repeat_2"/>
    <property type="match status" value="1"/>
</dbReference>
<dbReference type="FunFam" id="2.40.50.140:FF:000004">
    <property type="entry name" value="Elongation factor P"/>
    <property type="match status" value="1"/>
</dbReference>
<dbReference type="Gene3D" id="2.30.30.30">
    <property type="match status" value="1"/>
</dbReference>
<dbReference type="Gene3D" id="2.40.50.140">
    <property type="entry name" value="Nucleic acid-binding proteins"/>
    <property type="match status" value="2"/>
</dbReference>
<dbReference type="HAMAP" id="MF_00141">
    <property type="entry name" value="EF_P"/>
    <property type="match status" value="1"/>
</dbReference>
<dbReference type="InterPro" id="IPR015365">
    <property type="entry name" value="Elong-fact-P_C"/>
</dbReference>
<dbReference type="InterPro" id="IPR012340">
    <property type="entry name" value="NA-bd_OB-fold"/>
</dbReference>
<dbReference type="InterPro" id="IPR014722">
    <property type="entry name" value="Rib_uL2_dom2"/>
</dbReference>
<dbReference type="InterPro" id="IPR020599">
    <property type="entry name" value="Transl_elong_fac_P/YeiP"/>
</dbReference>
<dbReference type="InterPro" id="IPR013185">
    <property type="entry name" value="Transl_elong_KOW-like"/>
</dbReference>
<dbReference type="InterPro" id="IPR001059">
    <property type="entry name" value="Transl_elong_P/YeiP_cen"/>
</dbReference>
<dbReference type="InterPro" id="IPR013852">
    <property type="entry name" value="Transl_elong_P/YeiP_CS"/>
</dbReference>
<dbReference type="InterPro" id="IPR011768">
    <property type="entry name" value="Transl_elongation_fac_P"/>
</dbReference>
<dbReference type="InterPro" id="IPR008991">
    <property type="entry name" value="Translation_prot_SH3-like_sf"/>
</dbReference>
<dbReference type="NCBIfam" id="NF001810">
    <property type="entry name" value="PRK00529.1"/>
    <property type="match status" value="1"/>
</dbReference>
<dbReference type="NCBIfam" id="NF009090">
    <property type="entry name" value="PRK12426.1"/>
    <property type="match status" value="1"/>
</dbReference>
<dbReference type="PANTHER" id="PTHR30053">
    <property type="entry name" value="ELONGATION FACTOR P"/>
    <property type="match status" value="1"/>
</dbReference>
<dbReference type="PANTHER" id="PTHR30053:SF12">
    <property type="entry name" value="ELONGATION FACTOR P (EF-P) FAMILY PROTEIN"/>
    <property type="match status" value="1"/>
</dbReference>
<dbReference type="Pfam" id="PF01132">
    <property type="entry name" value="EFP"/>
    <property type="match status" value="1"/>
</dbReference>
<dbReference type="Pfam" id="PF08207">
    <property type="entry name" value="EFP_N"/>
    <property type="match status" value="1"/>
</dbReference>
<dbReference type="Pfam" id="PF09285">
    <property type="entry name" value="Elong-fact-P_C"/>
    <property type="match status" value="1"/>
</dbReference>
<dbReference type="PIRSF" id="PIRSF005901">
    <property type="entry name" value="EF-P"/>
    <property type="match status" value="1"/>
</dbReference>
<dbReference type="SMART" id="SM01185">
    <property type="entry name" value="EFP"/>
    <property type="match status" value="1"/>
</dbReference>
<dbReference type="SMART" id="SM00841">
    <property type="entry name" value="Elong-fact-P_C"/>
    <property type="match status" value="1"/>
</dbReference>
<dbReference type="SUPFAM" id="SSF50249">
    <property type="entry name" value="Nucleic acid-binding proteins"/>
    <property type="match status" value="2"/>
</dbReference>
<dbReference type="SUPFAM" id="SSF50104">
    <property type="entry name" value="Translation proteins SH3-like domain"/>
    <property type="match status" value="1"/>
</dbReference>
<dbReference type="PROSITE" id="PS01275">
    <property type="entry name" value="EFP"/>
    <property type="match status" value="1"/>
</dbReference>
<sequence length="184" mass="20672">MATSNQLTPGMTLSINNKLYRVESSVKVTVPKGTPFIKAKLKDLSNNEMVEKSFKLNQPIKDVSLIERRLEFLYPEGDEYLFLDVVNLDQVLVPAEIVSGKVNYLKEGVEIKAFFYGETIFAVELPQFLELMVAKTHSDDENDLANGAKIAILETGAKIEVPPFIETGDIIKVDTKTDEYIQRV</sequence>